<feature type="signal peptide" evidence="1">
    <location>
        <begin position="1"/>
        <end position="21"/>
    </location>
</feature>
<feature type="chain" id="PRO_0000450955" description="Conotoxin Cal12.4" evidence="3">
    <location>
        <begin position="22"/>
        <end position="64"/>
    </location>
</feature>
<proteinExistence type="inferred from homology"/>
<protein>
    <recommendedName>
        <fullName evidence="3">Conotoxin Cal12.4</fullName>
    </recommendedName>
    <alternativeName>
        <fullName evidence="2">O1_cal12b</fullName>
    </alternativeName>
</protein>
<organism>
    <name type="scientific">Californiconus californicus</name>
    <name type="common">California cone</name>
    <name type="synonym">Conus californicus</name>
    <dbReference type="NCBI Taxonomy" id="1736779"/>
    <lineage>
        <taxon>Eukaryota</taxon>
        <taxon>Metazoa</taxon>
        <taxon>Spiralia</taxon>
        <taxon>Lophotrochozoa</taxon>
        <taxon>Mollusca</taxon>
        <taxon>Gastropoda</taxon>
        <taxon>Caenogastropoda</taxon>
        <taxon>Neogastropoda</taxon>
        <taxon>Conoidea</taxon>
        <taxon>Conidae</taxon>
        <taxon>Californiconus</taxon>
    </lineage>
</organism>
<keyword id="KW-1015">Disulfide bond</keyword>
<keyword id="KW-0528">Neurotoxin</keyword>
<keyword id="KW-0964">Secreted</keyword>
<keyword id="KW-0732">Signal</keyword>
<keyword id="KW-0800">Toxin</keyword>
<name>O1C4_CONCL</name>
<accession>P0DTX3</accession>
<comment type="function">
    <text evidence="3">Probable neurotoxin.</text>
</comment>
<comment type="subcellular location">
    <subcellularLocation>
        <location evidence="4">Secreted</location>
    </subcellularLocation>
</comment>
<comment type="tissue specificity">
    <text evidence="4">Expressed by the venom duct.</text>
</comment>
<comment type="domain">
    <text evidence="3">The cysteine framework is XII (C-C-C-C-CC-C-C).</text>
</comment>
<comment type="PTM">
    <text evidence="4">Contains 4 disulfide bonds.</text>
</comment>
<comment type="similarity">
    <text evidence="3">Belongs to the conotoxin O1 superfamily.</text>
</comment>
<evidence type="ECO:0000255" key="1"/>
<evidence type="ECO:0000303" key="2">
    <source>
    </source>
</evidence>
<evidence type="ECO:0000305" key="3"/>
<evidence type="ECO:0000305" key="4">
    <source>
    </source>
</evidence>
<sequence length="64" mass="6709">MKLTCMLVVLLLVLPFGDLIANTGGLCGMPPGVCYPNGCACGQDTPCCHPSGCNRYNYCGPLLE</sequence>
<dbReference type="GO" id="GO:0005576">
    <property type="term" value="C:extracellular region"/>
    <property type="evidence" value="ECO:0007669"/>
    <property type="project" value="UniProtKB-SubCell"/>
</dbReference>
<dbReference type="GO" id="GO:0090729">
    <property type="term" value="F:toxin activity"/>
    <property type="evidence" value="ECO:0007669"/>
    <property type="project" value="UniProtKB-KW"/>
</dbReference>
<reference key="1">
    <citation type="journal article" date="2019" name="Toxins">
        <title>The diversified O-superfamily in Californiconus californicus presents a conotoxin with antimycobacterial activity.</title>
        <authorList>
            <person name="Bernaldez-Sarabia J."/>
            <person name="Figueroa-Montiel A."/>
            <person name="Duenas S."/>
            <person name="Cervantes-Luevano K."/>
            <person name="Beltran J.A."/>
            <person name="Ortiz E."/>
            <person name="Jimenez S."/>
            <person name="Possani L.D."/>
            <person name="Paniagua-Solis J.F."/>
            <person name="Gonzalez-Canudas J."/>
            <person name="Licea-Navarro A."/>
        </authorList>
    </citation>
    <scope>NUCLEOTIDE SEQUENCE [MRNA]</scope>
    <source>
        <tissue>Venom duct</tissue>
    </source>
</reference>